<organism>
    <name type="scientific">Gadus morhua</name>
    <name type="common">Atlantic cod</name>
    <dbReference type="NCBI Taxonomy" id="8049"/>
    <lineage>
        <taxon>Eukaryota</taxon>
        <taxon>Metazoa</taxon>
        <taxon>Chordata</taxon>
        <taxon>Craniata</taxon>
        <taxon>Vertebrata</taxon>
        <taxon>Euteleostomi</taxon>
        <taxon>Actinopterygii</taxon>
        <taxon>Neopterygii</taxon>
        <taxon>Teleostei</taxon>
        <taxon>Neoteleostei</taxon>
        <taxon>Acanthomorphata</taxon>
        <taxon>Zeiogadaria</taxon>
        <taxon>Gadariae</taxon>
        <taxon>Gadiformes</taxon>
        <taxon>Gadoidei</taxon>
        <taxon>Gadidae</taxon>
        <taxon>Gadus</taxon>
    </lineage>
</organism>
<protein>
    <recommendedName>
        <fullName>Neuropeptide Y</fullName>
        <shortName>NPY</shortName>
    </recommendedName>
</protein>
<evidence type="ECO:0000269" key="1">
    <source>
    </source>
</evidence>
<evidence type="ECO:0000305" key="2"/>
<gene>
    <name type="primary">npy</name>
</gene>
<proteinExistence type="evidence at protein level"/>
<dbReference type="PIR" id="S27054">
    <property type="entry name" value="S27054"/>
</dbReference>
<dbReference type="SMR" id="P80167"/>
<dbReference type="STRING" id="8049.ENSGMOP00000014649"/>
<dbReference type="Proteomes" id="UP000694546">
    <property type="component" value="Unplaced"/>
</dbReference>
<dbReference type="GO" id="GO:0005615">
    <property type="term" value="C:extracellular space"/>
    <property type="evidence" value="ECO:0007669"/>
    <property type="project" value="TreeGrafter"/>
</dbReference>
<dbReference type="GO" id="GO:0005184">
    <property type="term" value="F:neuropeptide hormone activity"/>
    <property type="evidence" value="ECO:0007669"/>
    <property type="project" value="TreeGrafter"/>
</dbReference>
<dbReference type="GO" id="GO:0031841">
    <property type="term" value="F:neuropeptide Y receptor binding"/>
    <property type="evidence" value="ECO:0007669"/>
    <property type="project" value="TreeGrafter"/>
</dbReference>
<dbReference type="GO" id="GO:0007631">
    <property type="term" value="P:feeding behavior"/>
    <property type="evidence" value="ECO:0007669"/>
    <property type="project" value="TreeGrafter"/>
</dbReference>
<dbReference type="GO" id="GO:0007218">
    <property type="term" value="P:neuropeptide signaling pathway"/>
    <property type="evidence" value="ECO:0007669"/>
    <property type="project" value="UniProtKB-KW"/>
</dbReference>
<dbReference type="CDD" id="cd00126">
    <property type="entry name" value="PAH"/>
    <property type="match status" value="1"/>
</dbReference>
<dbReference type="Gene3D" id="6.10.250.900">
    <property type="match status" value="1"/>
</dbReference>
<dbReference type="InterPro" id="IPR001955">
    <property type="entry name" value="Pancreatic_hormone-like"/>
</dbReference>
<dbReference type="InterPro" id="IPR020392">
    <property type="entry name" value="Pancreatic_hormone-like_CS"/>
</dbReference>
<dbReference type="PANTHER" id="PTHR10533">
    <property type="entry name" value="NEUROPEPTIDE Y/PANCREATIC HORMONE/PEPTIDE YY"/>
    <property type="match status" value="1"/>
</dbReference>
<dbReference type="PANTHER" id="PTHR10533:SF5">
    <property type="entry name" value="PRO-NEUROPEPTIDE Y"/>
    <property type="match status" value="1"/>
</dbReference>
<dbReference type="Pfam" id="PF00159">
    <property type="entry name" value="Hormone_3"/>
    <property type="match status" value="1"/>
</dbReference>
<dbReference type="PRINTS" id="PR00278">
    <property type="entry name" value="PANCHORMONE"/>
</dbReference>
<dbReference type="SMART" id="SM00309">
    <property type="entry name" value="PAH"/>
    <property type="match status" value="1"/>
</dbReference>
<dbReference type="PROSITE" id="PS00265">
    <property type="entry name" value="PANCREATIC_HORMONE_1"/>
    <property type="match status" value="1"/>
</dbReference>
<dbReference type="PROSITE" id="PS50276">
    <property type="entry name" value="PANCREATIC_HORMONE_2"/>
    <property type="match status" value="1"/>
</dbReference>
<sequence>YPIKPENPGEDAPADELAKYYSALRHYINLITRQRY</sequence>
<comment type="function">
    <text>NPY is implicated in the control of feeding and in secretion of gonadotrophin-release hormone.</text>
</comment>
<comment type="subcellular location">
    <subcellularLocation>
        <location>Secreted</location>
    </subcellularLocation>
</comment>
<comment type="similarity">
    <text evidence="2">Belongs to the NPY family.</text>
</comment>
<accession>P80167</accession>
<reference key="1">
    <citation type="journal article" date="1992" name="Eur. J. Biochem.">
        <title>Characterization of peptides related to neuropeptide tyrosine and peptide tyrosine-tyrosine from the brain and gastrointestinal tract of teleost fish.</title>
        <authorList>
            <person name="Jensen J."/>
            <person name="Conlon J.M."/>
        </authorList>
    </citation>
    <scope>PROTEIN SEQUENCE</scope>
    <scope>AMIDATION AT TYR-36</scope>
    <source>
        <tissue>Brain</tissue>
    </source>
</reference>
<keyword id="KW-0027">Amidation</keyword>
<keyword id="KW-0903">Direct protein sequencing</keyword>
<keyword id="KW-0527">Neuropeptide</keyword>
<keyword id="KW-1185">Reference proteome</keyword>
<keyword id="KW-0964">Secreted</keyword>
<feature type="peptide" id="PRO_0000044790" description="Neuropeptide Y">
    <location>
        <begin position="1"/>
        <end position="36"/>
    </location>
</feature>
<feature type="modified residue" description="Tyrosine amide" evidence="1">
    <location>
        <position position="36"/>
    </location>
</feature>
<name>NPY_GADMO</name>